<evidence type="ECO:0000255" key="1">
    <source>
        <dbReference type="HAMAP-Rule" id="MF_01038"/>
    </source>
</evidence>
<gene>
    <name evidence="1" type="primary">gpmI</name>
    <name type="synonym">pgm</name>
    <name type="ordered locus">OB2435</name>
</gene>
<accession>P59174</accession>
<name>GPMI_OCEIH</name>
<feature type="chain" id="PRO_0000212179" description="2,3-bisphosphoglycerate-independent phosphoglycerate mutase">
    <location>
        <begin position="1"/>
        <end position="512"/>
    </location>
</feature>
<feature type="active site" description="Phosphoserine intermediate" evidence="1">
    <location>
        <position position="63"/>
    </location>
</feature>
<feature type="binding site" evidence="1">
    <location>
        <position position="13"/>
    </location>
    <ligand>
        <name>Mn(2+)</name>
        <dbReference type="ChEBI" id="CHEBI:29035"/>
        <label>2</label>
    </ligand>
</feature>
<feature type="binding site" evidence="1">
    <location>
        <position position="63"/>
    </location>
    <ligand>
        <name>Mn(2+)</name>
        <dbReference type="ChEBI" id="CHEBI:29035"/>
        <label>2</label>
    </ligand>
</feature>
<feature type="binding site" evidence="1">
    <location>
        <position position="124"/>
    </location>
    <ligand>
        <name>substrate</name>
    </ligand>
</feature>
<feature type="binding site" evidence="1">
    <location>
        <begin position="154"/>
        <end position="155"/>
    </location>
    <ligand>
        <name>substrate</name>
    </ligand>
</feature>
<feature type="binding site" evidence="1">
    <location>
        <position position="186"/>
    </location>
    <ligand>
        <name>substrate</name>
    </ligand>
</feature>
<feature type="binding site" evidence="1">
    <location>
        <position position="192"/>
    </location>
    <ligand>
        <name>substrate</name>
    </ligand>
</feature>
<feature type="binding site" evidence="1">
    <location>
        <begin position="262"/>
        <end position="265"/>
    </location>
    <ligand>
        <name>substrate</name>
    </ligand>
</feature>
<feature type="binding site" evidence="1">
    <location>
        <position position="337"/>
    </location>
    <ligand>
        <name>substrate</name>
    </ligand>
</feature>
<feature type="binding site" evidence="1">
    <location>
        <position position="404"/>
    </location>
    <ligand>
        <name>Mn(2+)</name>
        <dbReference type="ChEBI" id="CHEBI:29035"/>
        <label>1</label>
    </ligand>
</feature>
<feature type="binding site" evidence="1">
    <location>
        <position position="408"/>
    </location>
    <ligand>
        <name>Mn(2+)</name>
        <dbReference type="ChEBI" id="CHEBI:29035"/>
        <label>1</label>
    </ligand>
</feature>
<feature type="binding site" evidence="1">
    <location>
        <position position="445"/>
    </location>
    <ligand>
        <name>Mn(2+)</name>
        <dbReference type="ChEBI" id="CHEBI:29035"/>
        <label>2</label>
    </ligand>
</feature>
<feature type="binding site" evidence="1">
    <location>
        <position position="446"/>
    </location>
    <ligand>
        <name>Mn(2+)</name>
        <dbReference type="ChEBI" id="CHEBI:29035"/>
        <label>2</label>
    </ligand>
</feature>
<feature type="binding site" evidence="1">
    <location>
        <position position="463"/>
    </location>
    <ligand>
        <name>Mn(2+)</name>
        <dbReference type="ChEBI" id="CHEBI:29035"/>
        <label>1</label>
    </ligand>
</feature>
<keyword id="KW-0324">Glycolysis</keyword>
<keyword id="KW-0413">Isomerase</keyword>
<keyword id="KW-0464">Manganese</keyword>
<keyword id="KW-0479">Metal-binding</keyword>
<keyword id="KW-0597">Phosphoprotein</keyword>
<keyword id="KW-1185">Reference proteome</keyword>
<keyword id="KW-0749">Sporulation</keyword>
<organism>
    <name type="scientific">Oceanobacillus iheyensis (strain DSM 14371 / CIP 107618 / JCM 11309 / KCTC 3954 / HTE831)</name>
    <dbReference type="NCBI Taxonomy" id="221109"/>
    <lineage>
        <taxon>Bacteria</taxon>
        <taxon>Bacillati</taxon>
        <taxon>Bacillota</taxon>
        <taxon>Bacilli</taxon>
        <taxon>Bacillales</taxon>
        <taxon>Bacillaceae</taxon>
        <taxon>Oceanobacillus</taxon>
    </lineage>
</organism>
<sequence length="512" mass="57178">MSQNKLAALIILDGFAIRDEVKGNAVKQANTPNFDRFWNQYAHNQLEASGKAVGLPDGQMGNSEVGHLNIGAGRIVYQSLTRVNVSIDEGDFYEVDAFIKSVEHAKKHDKALHLFGLLSDGGVHSHINHLFALLRLAKKHELENVFVHAFLDGRDVGPKTASKYIKETQDVMDELGVGQFATISGRYYSMDRDKRWDRVKKCYDAMVYGEGPSYKSAQEVVDDNYANEIYDEFVIPSVITDDNDEPVATIKDEDSIIFYNFRPDRAIQISRTFANEDFRDFERGDKAPKKLDFVMLTNFSETVDGYVAYQPVNLDNTVGEVLAQNNLNQLRIAETEKYPHVTFFMSGGREKEFPGEKRILIDSPKVATYDLKPEMSVYEVTDALLKELDKGEQNAIILNFANPDMVGHSGKLQPTIDAIEAVDECLGKVIDKITELGGHAIITADHGNSDEVMTLEDKPMTAHTTNPVPVIVTKDDIELRDGGILADLSPTLLDLLNVEKPKEMTGNSLIKK</sequence>
<reference key="1">
    <citation type="journal article" date="2002" name="Nucleic Acids Res.">
        <title>Genome sequence of Oceanobacillus iheyensis isolated from the Iheya Ridge and its unexpected adaptive capabilities to extreme environments.</title>
        <authorList>
            <person name="Takami H."/>
            <person name="Takaki Y."/>
            <person name="Uchiyama I."/>
        </authorList>
    </citation>
    <scope>NUCLEOTIDE SEQUENCE [LARGE SCALE GENOMIC DNA]</scope>
    <source>
        <strain>DSM 14371 / CIP 107618 / JCM 11309 / KCTC 3954 / HTE831</strain>
    </source>
</reference>
<comment type="function">
    <text evidence="1">Essential for rapid growth and for sporulation. Catalyzes the interconversion of 2-phosphoglycerate and 3-phosphoglycerate.</text>
</comment>
<comment type="catalytic activity">
    <reaction evidence="1">
        <text>(2R)-2-phosphoglycerate = (2R)-3-phosphoglycerate</text>
        <dbReference type="Rhea" id="RHEA:15901"/>
        <dbReference type="ChEBI" id="CHEBI:58272"/>
        <dbReference type="ChEBI" id="CHEBI:58289"/>
        <dbReference type="EC" id="5.4.2.12"/>
    </reaction>
</comment>
<comment type="cofactor">
    <cofactor evidence="1">
        <name>Mn(2+)</name>
        <dbReference type="ChEBI" id="CHEBI:29035"/>
    </cofactor>
    <text evidence="1">Binds 2 manganese ions per subunit.</text>
</comment>
<comment type="pathway">
    <text evidence="1">Carbohydrate degradation; glycolysis; pyruvate from D-glyceraldehyde 3-phosphate: step 3/5.</text>
</comment>
<comment type="subunit">
    <text evidence="1">Monomer.</text>
</comment>
<comment type="similarity">
    <text evidence="1">Belongs to the BPG-independent phosphoglycerate mutase family.</text>
</comment>
<dbReference type="EC" id="5.4.2.12" evidence="1"/>
<dbReference type="EMBL" id="BA000028">
    <property type="protein sequence ID" value="BAC14391.1"/>
    <property type="molecule type" value="Genomic_DNA"/>
</dbReference>
<dbReference type="RefSeq" id="WP_011066826.1">
    <property type="nucleotide sequence ID" value="NC_004193.1"/>
</dbReference>
<dbReference type="SMR" id="P59174"/>
<dbReference type="STRING" id="221109.gene:10734686"/>
<dbReference type="KEGG" id="oih:OB2435"/>
<dbReference type="eggNOG" id="COG0696">
    <property type="taxonomic scope" value="Bacteria"/>
</dbReference>
<dbReference type="HOGENOM" id="CLU_026099_2_0_9"/>
<dbReference type="OrthoDB" id="9800863at2"/>
<dbReference type="PhylomeDB" id="P59174"/>
<dbReference type="UniPathway" id="UPA00109">
    <property type="reaction ID" value="UER00186"/>
</dbReference>
<dbReference type="Proteomes" id="UP000000822">
    <property type="component" value="Chromosome"/>
</dbReference>
<dbReference type="GO" id="GO:0005829">
    <property type="term" value="C:cytosol"/>
    <property type="evidence" value="ECO:0007669"/>
    <property type="project" value="TreeGrafter"/>
</dbReference>
<dbReference type="GO" id="GO:0030145">
    <property type="term" value="F:manganese ion binding"/>
    <property type="evidence" value="ECO:0007669"/>
    <property type="project" value="UniProtKB-UniRule"/>
</dbReference>
<dbReference type="GO" id="GO:0004619">
    <property type="term" value="F:phosphoglycerate mutase activity"/>
    <property type="evidence" value="ECO:0007669"/>
    <property type="project" value="UniProtKB-EC"/>
</dbReference>
<dbReference type="GO" id="GO:0006007">
    <property type="term" value="P:glucose catabolic process"/>
    <property type="evidence" value="ECO:0007669"/>
    <property type="project" value="InterPro"/>
</dbReference>
<dbReference type="GO" id="GO:0006096">
    <property type="term" value="P:glycolytic process"/>
    <property type="evidence" value="ECO:0007669"/>
    <property type="project" value="UniProtKB-UniRule"/>
</dbReference>
<dbReference type="GO" id="GO:0030435">
    <property type="term" value="P:sporulation resulting in formation of a cellular spore"/>
    <property type="evidence" value="ECO:0007669"/>
    <property type="project" value="UniProtKB-KW"/>
</dbReference>
<dbReference type="CDD" id="cd16010">
    <property type="entry name" value="iPGM"/>
    <property type="match status" value="1"/>
</dbReference>
<dbReference type="FunFam" id="3.40.1450.10:FF:000001">
    <property type="entry name" value="2,3-bisphosphoglycerate-independent phosphoglycerate mutase"/>
    <property type="match status" value="1"/>
</dbReference>
<dbReference type="Gene3D" id="3.40.720.10">
    <property type="entry name" value="Alkaline Phosphatase, subunit A"/>
    <property type="match status" value="1"/>
</dbReference>
<dbReference type="Gene3D" id="3.40.1450.10">
    <property type="entry name" value="BPG-independent phosphoglycerate mutase, domain B"/>
    <property type="match status" value="1"/>
</dbReference>
<dbReference type="HAMAP" id="MF_01038">
    <property type="entry name" value="GpmI"/>
    <property type="match status" value="1"/>
</dbReference>
<dbReference type="InterPro" id="IPR017850">
    <property type="entry name" value="Alkaline_phosphatase_core_sf"/>
</dbReference>
<dbReference type="InterPro" id="IPR011258">
    <property type="entry name" value="BPG-indep_PGM_N"/>
</dbReference>
<dbReference type="InterPro" id="IPR006124">
    <property type="entry name" value="Metalloenzyme"/>
</dbReference>
<dbReference type="InterPro" id="IPR036646">
    <property type="entry name" value="PGAM_B_sf"/>
</dbReference>
<dbReference type="InterPro" id="IPR005995">
    <property type="entry name" value="Pgm_bpd_ind"/>
</dbReference>
<dbReference type="NCBIfam" id="TIGR01307">
    <property type="entry name" value="pgm_bpd_ind"/>
    <property type="match status" value="1"/>
</dbReference>
<dbReference type="PANTHER" id="PTHR31637">
    <property type="entry name" value="2,3-BISPHOSPHOGLYCERATE-INDEPENDENT PHOSPHOGLYCERATE MUTASE"/>
    <property type="match status" value="1"/>
</dbReference>
<dbReference type="PANTHER" id="PTHR31637:SF0">
    <property type="entry name" value="2,3-BISPHOSPHOGLYCERATE-INDEPENDENT PHOSPHOGLYCERATE MUTASE"/>
    <property type="match status" value="1"/>
</dbReference>
<dbReference type="Pfam" id="PF06415">
    <property type="entry name" value="iPGM_N"/>
    <property type="match status" value="1"/>
</dbReference>
<dbReference type="Pfam" id="PF01676">
    <property type="entry name" value="Metalloenzyme"/>
    <property type="match status" value="1"/>
</dbReference>
<dbReference type="PIRSF" id="PIRSF001492">
    <property type="entry name" value="IPGAM"/>
    <property type="match status" value="1"/>
</dbReference>
<dbReference type="SUPFAM" id="SSF64158">
    <property type="entry name" value="2,3-Bisphosphoglycerate-independent phosphoglycerate mutase, substrate-binding domain"/>
    <property type="match status" value="1"/>
</dbReference>
<dbReference type="SUPFAM" id="SSF53649">
    <property type="entry name" value="Alkaline phosphatase-like"/>
    <property type="match status" value="1"/>
</dbReference>
<protein>
    <recommendedName>
        <fullName evidence="1">2,3-bisphosphoglycerate-independent phosphoglycerate mutase</fullName>
        <shortName evidence="1">BPG-independent PGAM</shortName>
        <shortName evidence="1">Phosphoglyceromutase</shortName>
        <shortName evidence="1">iPGM</shortName>
        <ecNumber evidence="1">5.4.2.12</ecNumber>
    </recommendedName>
</protein>
<proteinExistence type="inferred from homology"/>